<organism>
    <name type="scientific">Lachancea kluyveri</name>
    <name type="common">Yeast</name>
    <name type="synonym">Saccharomyces kluyveri</name>
    <dbReference type="NCBI Taxonomy" id="4934"/>
    <lineage>
        <taxon>Eukaryota</taxon>
        <taxon>Fungi</taxon>
        <taxon>Dikarya</taxon>
        <taxon>Ascomycota</taxon>
        <taxon>Saccharomycotina</taxon>
        <taxon>Saccharomycetes</taxon>
        <taxon>Saccharomycetales</taxon>
        <taxon>Saccharomycetaceae</taxon>
        <taxon>Lachancea</taxon>
    </lineage>
</organism>
<dbReference type="EMBL" id="AY154653">
    <property type="protein sequence ID" value="AAO06875.2"/>
    <property type="molecule type" value="Genomic_DNA"/>
</dbReference>
<dbReference type="SMR" id="Q6YFE6"/>
<dbReference type="GO" id="GO:0005634">
    <property type="term" value="C:nucleus"/>
    <property type="evidence" value="ECO:0007669"/>
    <property type="project" value="UniProtKB-SubCell"/>
</dbReference>
<dbReference type="GO" id="GO:0003677">
    <property type="term" value="F:DNA binding"/>
    <property type="evidence" value="ECO:0007669"/>
    <property type="project" value="UniProtKB-KW"/>
</dbReference>
<dbReference type="GO" id="GO:0000981">
    <property type="term" value="F:DNA-binding transcription factor activity, RNA polymerase II-specific"/>
    <property type="evidence" value="ECO:0007669"/>
    <property type="project" value="InterPro"/>
</dbReference>
<dbReference type="GO" id="GO:0008270">
    <property type="term" value="F:zinc ion binding"/>
    <property type="evidence" value="ECO:0007669"/>
    <property type="project" value="InterPro"/>
</dbReference>
<dbReference type="GO" id="GO:0001080">
    <property type="term" value="P:nitrogen catabolite activation of transcription from RNA polymerase II promoter"/>
    <property type="evidence" value="ECO:0007669"/>
    <property type="project" value="TreeGrafter"/>
</dbReference>
<dbReference type="GO" id="GO:0009117">
    <property type="term" value="P:nucleotide metabolic process"/>
    <property type="evidence" value="ECO:0007669"/>
    <property type="project" value="UniProtKB-KW"/>
</dbReference>
<dbReference type="CDD" id="cd00067">
    <property type="entry name" value="GAL4"/>
    <property type="match status" value="1"/>
</dbReference>
<dbReference type="Gene3D" id="4.10.240.10">
    <property type="entry name" value="Zn(2)-C6 fungal-type DNA-binding domain"/>
    <property type="match status" value="1"/>
</dbReference>
<dbReference type="InterPro" id="IPR050797">
    <property type="entry name" value="Carb_Metab_Trans_Reg"/>
</dbReference>
<dbReference type="InterPro" id="IPR036864">
    <property type="entry name" value="Zn2-C6_fun-type_DNA-bd_sf"/>
</dbReference>
<dbReference type="InterPro" id="IPR001138">
    <property type="entry name" value="Zn2Cys6_DnaBD"/>
</dbReference>
<dbReference type="PANTHER" id="PTHR31668">
    <property type="entry name" value="GLUCOSE TRANSPORT TRANSCRIPTION REGULATOR RGT1-RELATED-RELATED"/>
    <property type="match status" value="1"/>
</dbReference>
<dbReference type="PANTHER" id="PTHR31668:SF9">
    <property type="entry name" value="URACIL CATABOLISM PROTEIN 2"/>
    <property type="match status" value="1"/>
</dbReference>
<dbReference type="SMART" id="SM00066">
    <property type="entry name" value="GAL4"/>
    <property type="match status" value="1"/>
</dbReference>
<dbReference type="SUPFAM" id="SSF57701">
    <property type="entry name" value="Zn2/Cys6 DNA-binding domain"/>
    <property type="match status" value="1"/>
</dbReference>
<dbReference type="PROSITE" id="PS00463">
    <property type="entry name" value="ZN2_CY6_FUNGAL_1"/>
    <property type="match status" value="1"/>
</dbReference>
<sequence>MASDNSQTQTRTKKPRKKRKTYSCGVCRKFKTRCDFEPLVGKCHRCNVLRLECSLTKEREEEILAAVESTSKSTLAPASLVSGQLPALAAANPVVANDAVVVAPVAATLSSRLNKLESSVGSLNSKLDLALMLLQGSNSAISNLKNLTSSKAGMGDRNATYDDDDDGDDDGHDHSDSDNFVNGIKLQEPPLKLISDIDERLFPTKAQSQQDILAKTQRPFVVARFNFLKYFNQHEQLCLDLSRDFLVKSHFWIIPGGIKEINRTYVEKHLFITSVFTIIAMGFDENNKYEKEQEQLYPLVERFLTNTLTMFEKLTDHDIEAILYCSMFNISRKSKRHRQLKFNSLVLCNFAVNSVLNIVDFHKIKERVLINEEYSALDLYHLRILNSLTACRLQYSIGSGNFTIQDDMLKEFNNLTAKFPQANFGDDIKISEINLGDIVNGIFLNFKAYFKGFSKRFRAETRGHADRNRDCLVIPELEYWLKNWDELLSKDGGGVLLFAYDFYYSMICRSFLTEFFEEEFQNDVVYFKCALKTMKRYCFSLLDGFLKLPPSLIKGAPTITLHQLVYACLTLCDFLHCFDVAERQQVLNLCTKIYWHLNTIGEKLNEATDNVGKIIKSLIDTSKRKAQVSGRLAVPRNTKRGSPSMTPGFQQSVQSSSALQGSKAGSPQSARSVNSQGSGADSLAAASFNMPDVAQFNSFEDFFQDFFDNLKPTTQSMFSTLQQQQQ</sequence>
<protein>
    <recommendedName>
        <fullName>Uracil catabolism protein 2</fullName>
    </recommendedName>
</protein>
<accession>Q6YFE6</accession>
<keyword id="KW-0010">Activator</keyword>
<keyword id="KW-0238">DNA-binding</keyword>
<keyword id="KW-0479">Metal-binding</keyword>
<keyword id="KW-0546">Nucleotide metabolism</keyword>
<keyword id="KW-0539">Nucleus</keyword>
<keyword id="KW-0804">Transcription</keyword>
<keyword id="KW-0805">Transcription regulation</keyword>
<keyword id="KW-0862">Zinc</keyword>
<evidence type="ECO:0000250" key="1"/>
<evidence type="ECO:0000256" key="2">
    <source>
        <dbReference type="SAM" id="MobiDB-lite"/>
    </source>
</evidence>
<evidence type="ECO:0000269" key="3">
    <source>
    </source>
</evidence>
<evidence type="ECO:0000305" key="4"/>
<reference key="1">
    <citation type="journal article" date="2008" name="J. Mol. Biol.">
        <title>A second pathway to degrade pyrimidine nucleic acid precursors in eukaryotes.</title>
        <authorList>
            <person name="Andersen G."/>
            <person name="Bjoernberg O."/>
            <person name="Polakova S."/>
            <person name="Pynyaha Y."/>
            <person name="Rasmussen A."/>
            <person name="Moeller K."/>
            <person name="Hofer A."/>
            <person name="Moritz T."/>
            <person name="Sandrini M.P."/>
            <person name="Merico A.M."/>
            <person name="Compagno C."/>
            <person name="Aekerlund H.E."/>
            <person name="Gojkovic Z."/>
            <person name="Piskur J."/>
        </authorList>
    </citation>
    <scope>NUCLEOTIDE SEQUENCE [GENOMIC DNA]</scope>
    <scope>FUNCTION</scope>
</reference>
<reference key="2">
    <citation type="submission" date="2010-11" db="EMBL/GenBank/DDBJ databases">
        <authorList>
            <person name="Rasmussen A."/>
            <person name="Piskur J."/>
        </authorList>
    </citation>
    <scope>SEQUENCE REVISION TO 280 AND 436</scope>
</reference>
<proteinExistence type="inferred from homology"/>
<name>URC2_LACKL</name>
<comment type="function">
    <text evidence="3">Probable transcriptional activator involved in uracil catabolism.</text>
</comment>
<comment type="subcellular location">
    <subcellularLocation>
        <location evidence="1">Nucleus</location>
    </subcellularLocation>
</comment>
<comment type="similarity">
    <text evidence="4">Belongs to the URC2 family.</text>
</comment>
<feature type="chain" id="PRO_0000367586" description="Uracil catabolism protein 2">
    <location>
        <begin position="1"/>
        <end position="726"/>
    </location>
</feature>
<feature type="DNA-binding region" description="Zn(2)-C6 fungal-type">
    <location>
        <begin position="24"/>
        <end position="53"/>
    </location>
</feature>
<feature type="region of interest" description="Disordered" evidence="2">
    <location>
        <begin position="152"/>
        <end position="183"/>
    </location>
</feature>
<feature type="region of interest" description="Disordered" evidence="2">
    <location>
        <begin position="629"/>
        <end position="681"/>
    </location>
</feature>
<feature type="compositionally biased region" description="Acidic residues" evidence="2">
    <location>
        <begin position="161"/>
        <end position="170"/>
    </location>
</feature>
<feature type="compositionally biased region" description="Polar residues" evidence="2">
    <location>
        <begin position="640"/>
        <end position="679"/>
    </location>
</feature>
<gene>
    <name type="primary">URC2</name>
</gene>